<organism>
    <name type="scientific">Paraburkholderia phytofirmans (strain DSM 17436 / LMG 22146 / PsJN)</name>
    <name type="common">Burkholderia phytofirmans</name>
    <dbReference type="NCBI Taxonomy" id="398527"/>
    <lineage>
        <taxon>Bacteria</taxon>
        <taxon>Pseudomonadati</taxon>
        <taxon>Pseudomonadota</taxon>
        <taxon>Betaproteobacteria</taxon>
        <taxon>Burkholderiales</taxon>
        <taxon>Burkholderiaceae</taxon>
        <taxon>Paraburkholderia</taxon>
    </lineage>
</organism>
<comment type="function">
    <text evidence="1">Catalyzes the NADPH-dependent reduction of glutamyl-tRNA(Glu) to glutamate 1-semialdehyde (GSA).</text>
</comment>
<comment type="catalytic activity">
    <reaction evidence="1">
        <text>(S)-4-amino-5-oxopentanoate + tRNA(Glu) + NADP(+) = L-glutamyl-tRNA(Glu) + NADPH + H(+)</text>
        <dbReference type="Rhea" id="RHEA:12344"/>
        <dbReference type="Rhea" id="RHEA-COMP:9663"/>
        <dbReference type="Rhea" id="RHEA-COMP:9680"/>
        <dbReference type="ChEBI" id="CHEBI:15378"/>
        <dbReference type="ChEBI" id="CHEBI:57501"/>
        <dbReference type="ChEBI" id="CHEBI:57783"/>
        <dbReference type="ChEBI" id="CHEBI:58349"/>
        <dbReference type="ChEBI" id="CHEBI:78442"/>
        <dbReference type="ChEBI" id="CHEBI:78520"/>
        <dbReference type="EC" id="1.2.1.70"/>
    </reaction>
</comment>
<comment type="pathway">
    <text evidence="1">Porphyrin-containing compound metabolism; protoporphyrin-IX biosynthesis; 5-aminolevulinate from L-glutamyl-tRNA(Glu): step 1/2.</text>
</comment>
<comment type="subunit">
    <text evidence="1">Homodimer.</text>
</comment>
<comment type="domain">
    <text evidence="1">Possesses an unusual extended V-shaped dimeric structure with each monomer consisting of three distinct domains arranged along a curved 'spinal' alpha-helix. The N-terminal catalytic domain specifically recognizes the glutamate moiety of the substrate. The second domain is the NADPH-binding domain, and the third C-terminal domain is responsible for dimerization.</text>
</comment>
<comment type="miscellaneous">
    <text evidence="1">During catalysis, the active site Cys acts as a nucleophile attacking the alpha-carbonyl group of tRNA-bound glutamate with the formation of a thioester intermediate between enzyme and glutamate, and the concomitant release of tRNA(Glu). The thioester intermediate is finally reduced by direct hydride transfer from NADPH, to form the product GSA.</text>
</comment>
<comment type="similarity">
    <text evidence="1">Belongs to the glutamyl-tRNA reductase family.</text>
</comment>
<evidence type="ECO:0000255" key="1">
    <source>
        <dbReference type="HAMAP-Rule" id="MF_00087"/>
    </source>
</evidence>
<name>HEM1_PARPJ</name>
<proteinExistence type="inferred from homology"/>
<accession>B2SZ26</accession>
<protein>
    <recommendedName>
        <fullName evidence="1">Glutamyl-tRNA reductase</fullName>
        <shortName evidence="1">GluTR</shortName>
        <ecNumber evidence="1">1.2.1.70</ecNumber>
    </recommendedName>
</protein>
<feature type="chain" id="PRO_1000093120" description="Glutamyl-tRNA reductase">
    <location>
        <begin position="1"/>
        <end position="428"/>
    </location>
</feature>
<feature type="active site" description="Nucleophile" evidence="1">
    <location>
        <position position="56"/>
    </location>
</feature>
<feature type="binding site" evidence="1">
    <location>
        <begin position="55"/>
        <end position="58"/>
    </location>
    <ligand>
        <name>substrate</name>
    </ligand>
</feature>
<feature type="binding site" evidence="1">
    <location>
        <position position="114"/>
    </location>
    <ligand>
        <name>substrate</name>
    </ligand>
</feature>
<feature type="binding site" evidence="1">
    <location>
        <begin position="119"/>
        <end position="121"/>
    </location>
    <ligand>
        <name>substrate</name>
    </ligand>
</feature>
<feature type="binding site" evidence="1">
    <location>
        <position position="125"/>
    </location>
    <ligand>
        <name>substrate</name>
    </ligand>
</feature>
<feature type="binding site" evidence="1">
    <location>
        <begin position="194"/>
        <end position="199"/>
    </location>
    <ligand>
        <name>NADP(+)</name>
        <dbReference type="ChEBI" id="CHEBI:58349"/>
    </ligand>
</feature>
<feature type="site" description="Important for activity" evidence="1">
    <location>
        <position position="104"/>
    </location>
</feature>
<gene>
    <name evidence="1" type="primary">hemA</name>
    <name type="ordered locus">Bphyt_3521</name>
</gene>
<keyword id="KW-0521">NADP</keyword>
<keyword id="KW-0560">Oxidoreductase</keyword>
<keyword id="KW-0627">Porphyrin biosynthesis</keyword>
<dbReference type="EC" id="1.2.1.70" evidence="1"/>
<dbReference type="EMBL" id="CP001052">
    <property type="protein sequence ID" value="ACD17911.1"/>
    <property type="molecule type" value="Genomic_DNA"/>
</dbReference>
<dbReference type="RefSeq" id="WP_012434472.1">
    <property type="nucleotide sequence ID" value="NC_010681.1"/>
</dbReference>
<dbReference type="SMR" id="B2SZ26"/>
<dbReference type="STRING" id="398527.Bphyt_3521"/>
<dbReference type="KEGG" id="bpy:Bphyt_3521"/>
<dbReference type="eggNOG" id="COG0373">
    <property type="taxonomic scope" value="Bacteria"/>
</dbReference>
<dbReference type="HOGENOM" id="CLU_035113_2_2_4"/>
<dbReference type="OrthoDB" id="110209at2"/>
<dbReference type="UniPathway" id="UPA00251">
    <property type="reaction ID" value="UER00316"/>
</dbReference>
<dbReference type="Proteomes" id="UP000001739">
    <property type="component" value="Chromosome 1"/>
</dbReference>
<dbReference type="GO" id="GO:0008883">
    <property type="term" value="F:glutamyl-tRNA reductase activity"/>
    <property type="evidence" value="ECO:0007669"/>
    <property type="project" value="UniProtKB-UniRule"/>
</dbReference>
<dbReference type="GO" id="GO:0050661">
    <property type="term" value="F:NADP binding"/>
    <property type="evidence" value="ECO:0007669"/>
    <property type="project" value="InterPro"/>
</dbReference>
<dbReference type="GO" id="GO:0019353">
    <property type="term" value="P:protoporphyrinogen IX biosynthetic process from glutamate"/>
    <property type="evidence" value="ECO:0007669"/>
    <property type="project" value="TreeGrafter"/>
</dbReference>
<dbReference type="CDD" id="cd05213">
    <property type="entry name" value="NAD_bind_Glutamyl_tRNA_reduct"/>
    <property type="match status" value="1"/>
</dbReference>
<dbReference type="FunFam" id="3.30.460.30:FF:000001">
    <property type="entry name" value="Glutamyl-tRNA reductase"/>
    <property type="match status" value="1"/>
</dbReference>
<dbReference type="FunFam" id="3.40.50.720:FF:000031">
    <property type="entry name" value="Glutamyl-tRNA reductase"/>
    <property type="match status" value="1"/>
</dbReference>
<dbReference type="Gene3D" id="3.30.460.30">
    <property type="entry name" value="Glutamyl-tRNA reductase, N-terminal domain"/>
    <property type="match status" value="1"/>
</dbReference>
<dbReference type="Gene3D" id="3.40.50.720">
    <property type="entry name" value="NAD(P)-binding Rossmann-like Domain"/>
    <property type="match status" value="1"/>
</dbReference>
<dbReference type="HAMAP" id="MF_00087">
    <property type="entry name" value="Glu_tRNA_reductase"/>
    <property type="match status" value="1"/>
</dbReference>
<dbReference type="InterPro" id="IPR000343">
    <property type="entry name" value="4pyrrol_synth_GluRdtase"/>
</dbReference>
<dbReference type="InterPro" id="IPR015896">
    <property type="entry name" value="4pyrrol_synth_GluRdtase_dimer"/>
</dbReference>
<dbReference type="InterPro" id="IPR015895">
    <property type="entry name" value="4pyrrol_synth_GluRdtase_N"/>
</dbReference>
<dbReference type="InterPro" id="IPR018214">
    <property type="entry name" value="GluRdtase_CS"/>
</dbReference>
<dbReference type="InterPro" id="IPR036453">
    <property type="entry name" value="GluRdtase_dimer_dom_sf"/>
</dbReference>
<dbReference type="InterPro" id="IPR036343">
    <property type="entry name" value="GluRdtase_N_sf"/>
</dbReference>
<dbReference type="InterPro" id="IPR036291">
    <property type="entry name" value="NAD(P)-bd_dom_sf"/>
</dbReference>
<dbReference type="InterPro" id="IPR006151">
    <property type="entry name" value="Shikm_DH/Glu-tRNA_Rdtase"/>
</dbReference>
<dbReference type="NCBIfam" id="TIGR01035">
    <property type="entry name" value="hemA"/>
    <property type="match status" value="1"/>
</dbReference>
<dbReference type="PANTHER" id="PTHR43013">
    <property type="entry name" value="GLUTAMYL-TRNA REDUCTASE"/>
    <property type="match status" value="1"/>
</dbReference>
<dbReference type="PANTHER" id="PTHR43013:SF1">
    <property type="entry name" value="GLUTAMYL-TRNA REDUCTASE"/>
    <property type="match status" value="1"/>
</dbReference>
<dbReference type="Pfam" id="PF00745">
    <property type="entry name" value="GlutR_dimer"/>
    <property type="match status" value="1"/>
</dbReference>
<dbReference type="Pfam" id="PF05201">
    <property type="entry name" value="GlutR_N"/>
    <property type="match status" value="1"/>
</dbReference>
<dbReference type="Pfam" id="PF01488">
    <property type="entry name" value="Shikimate_DH"/>
    <property type="match status" value="1"/>
</dbReference>
<dbReference type="PIRSF" id="PIRSF000445">
    <property type="entry name" value="4pyrrol_synth_GluRdtase"/>
    <property type="match status" value="1"/>
</dbReference>
<dbReference type="SUPFAM" id="SSF69742">
    <property type="entry name" value="Glutamyl tRNA-reductase catalytic, N-terminal domain"/>
    <property type="match status" value="1"/>
</dbReference>
<dbReference type="SUPFAM" id="SSF69075">
    <property type="entry name" value="Glutamyl tRNA-reductase dimerization domain"/>
    <property type="match status" value="1"/>
</dbReference>
<dbReference type="SUPFAM" id="SSF51735">
    <property type="entry name" value="NAD(P)-binding Rossmann-fold domains"/>
    <property type="match status" value="1"/>
</dbReference>
<dbReference type="PROSITE" id="PS00747">
    <property type="entry name" value="GLUTR"/>
    <property type="match status" value="1"/>
</dbReference>
<sequence length="428" mass="47203">MQLLTIGINHHTAPVALRERVAFPLEQIKPALETFKSIWLGPSARTAPEAAILSTCNRTELYCATDDQAAREAAIQWLSRYHNLPIDELAPHVYALPQSEAVRHAFRVASGLDSMVLGETQIVGQMKDAVRTASEAGALGTYLNQLFQRTFAVAKEVRSTTEIGAQSVSMAAAAVRLAQRIFDKVSNQRVLFIGAGEMIELCATHFAAQQPRELVVANRTAERGTRLAERFNGRAIPLSELPSRMHEFDIIVSCTASTLPIIGLGAVERAVKARRHRPIFMVDLAVPRDIEPEVGQLEDVFLYTVDDLGAIVREGNASRQAAVAQAEAIIETRVQNFMQWLDARSIVPVIRHMHTQADVLRRAEVERAQKMLARGDDPAAVLEALSQSLTNKLIHGPTHALNRASSENRDKLIELMSGFYKHSGSTER</sequence>
<reference key="1">
    <citation type="journal article" date="2011" name="J. Bacteriol.">
        <title>Complete genome sequence of the plant growth-promoting endophyte Burkholderia phytofirmans strain PsJN.</title>
        <authorList>
            <person name="Weilharter A."/>
            <person name="Mitter B."/>
            <person name="Shin M.V."/>
            <person name="Chain P.S."/>
            <person name="Nowak J."/>
            <person name="Sessitsch A."/>
        </authorList>
    </citation>
    <scope>NUCLEOTIDE SEQUENCE [LARGE SCALE GENOMIC DNA]</scope>
    <source>
        <strain>DSM 17436 / LMG 22146 / PsJN</strain>
    </source>
</reference>